<dbReference type="EC" id="3.2.2.9" evidence="1"/>
<dbReference type="EMBL" id="CP000970">
    <property type="protein sequence ID" value="ACB17271.1"/>
    <property type="molecule type" value="Genomic_DNA"/>
</dbReference>
<dbReference type="RefSeq" id="WP_000689844.1">
    <property type="nucleotide sequence ID" value="NC_010498.1"/>
</dbReference>
<dbReference type="SMR" id="B1LGW2"/>
<dbReference type="GeneID" id="93777267"/>
<dbReference type="KEGG" id="ecm:EcSMS35_0171"/>
<dbReference type="HOGENOM" id="CLU_031248_2_2_6"/>
<dbReference type="UniPathway" id="UPA00904">
    <property type="reaction ID" value="UER00871"/>
</dbReference>
<dbReference type="Proteomes" id="UP000007011">
    <property type="component" value="Chromosome"/>
</dbReference>
<dbReference type="GO" id="GO:0005829">
    <property type="term" value="C:cytosol"/>
    <property type="evidence" value="ECO:0007669"/>
    <property type="project" value="TreeGrafter"/>
</dbReference>
<dbReference type="GO" id="GO:0008782">
    <property type="term" value="F:adenosylhomocysteine nucleosidase activity"/>
    <property type="evidence" value="ECO:0007669"/>
    <property type="project" value="UniProtKB-UniRule"/>
</dbReference>
<dbReference type="GO" id="GO:0008930">
    <property type="term" value="F:methylthioadenosine nucleosidase activity"/>
    <property type="evidence" value="ECO:0007669"/>
    <property type="project" value="UniProtKB-UniRule"/>
</dbReference>
<dbReference type="GO" id="GO:0019509">
    <property type="term" value="P:L-methionine salvage from methylthioadenosine"/>
    <property type="evidence" value="ECO:0007669"/>
    <property type="project" value="UniProtKB-UniRule"/>
</dbReference>
<dbReference type="GO" id="GO:0019284">
    <property type="term" value="P:L-methionine salvage from S-adenosylmethionine"/>
    <property type="evidence" value="ECO:0007669"/>
    <property type="project" value="TreeGrafter"/>
</dbReference>
<dbReference type="GO" id="GO:0046124">
    <property type="term" value="P:purine deoxyribonucleoside catabolic process"/>
    <property type="evidence" value="ECO:0007669"/>
    <property type="project" value="UniProtKB-UniRule"/>
</dbReference>
<dbReference type="CDD" id="cd09008">
    <property type="entry name" value="MTAN"/>
    <property type="match status" value="1"/>
</dbReference>
<dbReference type="FunFam" id="3.40.50.1580:FF:000001">
    <property type="entry name" value="MTA/SAH nucleosidase family protein"/>
    <property type="match status" value="1"/>
</dbReference>
<dbReference type="Gene3D" id="3.40.50.1580">
    <property type="entry name" value="Nucleoside phosphorylase domain"/>
    <property type="match status" value="1"/>
</dbReference>
<dbReference type="HAMAP" id="MF_01684">
    <property type="entry name" value="Salvage_MtnN"/>
    <property type="match status" value="1"/>
</dbReference>
<dbReference type="InterPro" id="IPR010049">
    <property type="entry name" value="MTA_SAH_Nsdase"/>
</dbReference>
<dbReference type="InterPro" id="IPR000845">
    <property type="entry name" value="Nucleoside_phosphorylase_d"/>
</dbReference>
<dbReference type="InterPro" id="IPR035994">
    <property type="entry name" value="Nucleoside_phosphorylase_sf"/>
</dbReference>
<dbReference type="NCBIfam" id="TIGR01704">
    <property type="entry name" value="MTA_SAH-Nsdase"/>
    <property type="match status" value="1"/>
</dbReference>
<dbReference type="NCBIfam" id="NF004079">
    <property type="entry name" value="PRK05584.1"/>
    <property type="match status" value="1"/>
</dbReference>
<dbReference type="PANTHER" id="PTHR46832">
    <property type="entry name" value="5'-METHYLTHIOADENOSINE/S-ADENOSYLHOMOCYSTEINE NUCLEOSIDASE"/>
    <property type="match status" value="1"/>
</dbReference>
<dbReference type="PANTHER" id="PTHR46832:SF1">
    <property type="entry name" value="5'-METHYLTHIOADENOSINE_S-ADENOSYLHOMOCYSTEINE NUCLEOSIDASE"/>
    <property type="match status" value="1"/>
</dbReference>
<dbReference type="Pfam" id="PF01048">
    <property type="entry name" value="PNP_UDP_1"/>
    <property type="match status" value="1"/>
</dbReference>
<dbReference type="SUPFAM" id="SSF53167">
    <property type="entry name" value="Purine and uridine phosphorylases"/>
    <property type="match status" value="1"/>
</dbReference>
<organism>
    <name type="scientific">Escherichia coli (strain SMS-3-5 / SECEC)</name>
    <dbReference type="NCBI Taxonomy" id="439855"/>
    <lineage>
        <taxon>Bacteria</taxon>
        <taxon>Pseudomonadati</taxon>
        <taxon>Pseudomonadota</taxon>
        <taxon>Gammaproteobacteria</taxon>
        <taxon>Enterobacterales</taxon>
        <taxon>Enterobacteriaceae</taxon>
        <taxon>Escherichia</taxon>
    </lineage>
</organism>
<evidence type="ECO:0000255" key="1">
    <source>
        <dbReference type="HAMAP-Rule" id="MF_01684"/>
    </source>
</evidence>
<reference key="1">
    <citation type="journal article" date="2008" name="J. Bacteriol.">
        <title>Insights into the environmental resistance gene pool from the genome sequence of the multidrug-resistant environmental isolate Escherichia coli SMS-3-5.</title>
        <authorList>
            <person name="Fricke W.F."/>
            <person name="Wright M.S."/>
            <person name="Lindell A.H."/>
            <person name="Harkins D.M."/>
            <person name="Baker-Austin C."/>
            <person name="Ravel J."/>
            <person name="Stepanauskas R."/>
        </authorList>
    </citation>
    <scope>NUCLEOTIDE SEQUENCE [LARGE SCALE GENOMIC DNA]</scope>
    <source>
        <strain>SMS-3-5 / SECEC</strain>
    </source>
</reference>
<proteinExistence type="inferred from homology"/>
<name>MTNN_ECOSM</name>
<accession>B1LGW2</accession>
<feature type="chain" id="PRO_0000359295" description="5'-methylthioadenosine/S-adenosylhomocysteine nucleosidase">
    <location>
        <begin position="1"/>
        <end position="232"/>
    </location>
</feature>
<feature type="active site" description="Proton acceptor" evidence="1">
    <location>
        <position position="12"/>
    </location>
</feature>
<feature type="active site" description="Proton donor" evidence="1">
    <location>
        <position position="197"/>
    </location>
</feature>
<feature type="binding site" evidence="1">
    <location>
        <position position="78"/>
    </location>
    <ligand>
        <name>substrate</name>
    </ligand>
</feature>
<feature type="binding site" evidence="1">
    <location>
        <position position="152"/>
    </location>
    <ligand>
        <name>substrate</name>
    </ligand>
</feature>
<feature type="binding site" evidence="1">
    <location>
        <begin position="173"/>
        <end position="174"/>
    </location>
    <ligand>
        <name>substrate</name>
    </ligand>
</feature>
<keyword id="KW-0028">Amino-acid biosynthesis</keyword>
<keyword id="KW-0378">Hydrolase</keyword>
<keyword id="KW-0486">Methionine biosynthesis</keyword>
<sequence>MKIGIIGAMEEEVTLLRDKIENRQTISLGGCEIYTGQLNGTEVALLKSGIGKVAAALGATLLLEHCKPDVIINTGSAGGLAPTLKVGDIVVSDEARYHDADVTAFGYEYGQLPGCPAGFKADDKLIAAAEACIAELNLNAVRGLIVSGDAFINGSVGLAKIRHNFPQAIAVEMEATAIAHVCHNFNVPFVVVRAISDVADQQSHLSFDEFLAVAAKQSSLMVESLVQKLAHG</sequence>
<gene>
    <name evidence="1" type="primary">mtnN</name>
    <name type="ordered locus">EcSMS35_0171</name>
</gene>
<comment type="function">
    <text evidence="1">Catalyzes the irreversible cleavage of the glycosidic bond in both 5'-methylthioadenosine (MTA) and S-adenosylhomocysteine (SAH/AdoHcy) to adenine and the corresponding thioribose, 5'-methylthioribose and S-ribosylhomocysteine, respectively. Also cleaves 5'-deoxyadenosine, a toxic by-product of radical S-adenosylmethionine (SAM) enzymes, into 5-deoxyribose and adenine. Thus, is required for in vivo function of the radical SAM enzymes biotin synthase and lipoic acid synthase, that are inhibited by 5'-deoxyadenosine accumulation.</text>
</comment>
<comment type="catalytic activity">
    <reaction evidence="1">
        <text>S-adenosyl-L-homocysteine + H2O = S-(5-deoxy-D-ribos-5-yl)-L-homocysteine + adenine</text>
        <dbReference type="Rhea" id="RHEA:17805"/>
        <dbReference type="ChEBI" id="CHEBI:15377"/>
        <dbReference type="ChEBI" id="CHEBI:16708"/>
        <dbReference type="ChEBI" id="CHEBI:57856"/>
        <dbReference type="ChEBI" id="CHEBI:58195"/>
        <dbReference type="EC" id="3.2.2.9"/>
    </reaction>
</comment>
<comment type="catalytic activity">
    <reaction evidence="1">
        <text>S-methyl-5'-thioadenosine + H2O = 5-(methylsulfanyl)-D-ribose + adenine</text>
        <dbReference type="Rhea" id="RHEA:13617"/>
        <dbReference type="ChEBI" id="CHEBI:15377"/>
        <dbReference type="ChEBI" id="CHEBI:16708"/>
        <dbReference type="ChEBI" id="CHEBI:17509"/>
        <dbReference type="ChEBI" id="CHEBI:78440"/>
        <dbReference type="EC" id="3.2.2.9"/>
    </reaction>
</comment>
<comment type="catalytic activity">
    <reaction evidence="1">
        <text>5'-deoxyadenosine + H2O = 5-deoxy-D-ribose + adenine</text>
        <dbReference type="Rhea" id="RHEA:29859"/>
        <dbReference type="ChEBI" id="CHEBI:15377"/>
        <dbReference type="ChEBI" id="CHEBI:16708"/>
        <dbReference type="ChEBI" id="CHEBI:17319"/>
        <dbReference type="ChEBI" id="CHEBI:149540"/>
        <dbReference type="EC" id="3.2.2.9"/>
    </reaction>
    <physiologicalReaction direction="left-to-right" evidence="1">
        <dbReference type="Rhea" id="RHEA:29860"/>
    </physiologicalReaction>
</comment>
<comment type="pathway">
    <text evidence="1">Amino-acid biosynthesis; L-methionine biosynthesis via salvage pathway; S-methyl-5-thio-alpha-D-ribose 1-phosphate from S-methyl-5'-thioadenosine (hydrolase route): step 1/2.</text>
</comment>
<comment type="subunit">
    <text evidence="1">Homodimer.</text>
</comment>
<comment type="similarity">
    <text evidence="1">Belongs to the PNP/UDP phosphorylase family. MtnN subfamily.</text>
</comment>
<protein>
    <recommendedName>
        <fullName evidence="1">5'-methylthioadenosine/S-adenosylhomocysteine nucleosidase</fullName>
        <shortName evidence="1">MTA/SAH nucleosidase</shortName>
        <shortName evidence="1">MTAN</shortName>
        <ecNumber evidence="1">3.2.2.9</ecNumber>
    </recommendedName>
    <alternativeName>
        <fullName evidence="1">5'-deoxyadenosine nucleosidase</fullName>
        <shortName evidence="1">DOA nucleosidase</shortName>
        <shortName evidence="1">dAdo nucleosidase</shortName>
    </alternativeName>
    <alternativeName>
        <fullName evidence="1">5'-methylthioadenosine nucleosidase</fullName>
        <shortName evidence="1">MTA nucleosidase</shortName>
    </alternativeName>
    <alternativeName>
        <fullName evidence="1">S-adenosylhomocysteine nucleosidase</fullName>
        <shortName evidence="1">AdoHcy nucleosidase</shortName>
        <shortName evidence="1">SAH nucleosidase</shortName>
        <shortName evidence="1">SRH nucleosidase</shortName>
    </alternativeName>
</protein>